<sequence>MARIAGINIPPQQHAEIGLTAIFGIGRTRARKICEAAGVPVTKKVKDLTDAELERIREHIGVFAVEGDLRREVQLSIKRLIDLGTYRGMRHKRGLPVRGQRTRTNARTRKGPRRAAASLKK</sequence>
<keyword id="KW-0687">Ribonucleoprotein</keyword>
<keyword id="KW-0689">Ribosomal protein</keyword>
<keyword id="KW-0694">RNA-binding</keyword>
<keyword id="KW-0699">rRNA-binding</keyword>
<keyword id="KW-0820">tRNA-binding</keyword>
<organism>
    <name type="scientific">Bordetella parapertussis (strain 12822 / ATCC BAA-587 / NCTC 13253)</name>
    <dbReference type="NCBI Taxonomy" id="257311"/>
    <lineage>
        <taxon>Bacteria</taxon>
        <taxon>Pseudomonadati</taxon>
        <taxon>Pseudomonadota</taxon>
        <taxon>Betaproteobacteria</taxon>
        <taxon>Burkholderiales</taxon>
        <taxon>Alcaligenaceae</taxon>
        <taxon>Bordetella</taxon>
    </lineage>
</organism>
<dbReference type="EMBL" id="BX640423">
    <property type="protein sequence ID" value="CAE39795.1"/>
    <property type="molecule type" value="Genomic_DNA"/>
</dbReference>
<dbReference type="RefSeq" id="WP_003806929.1">
    <property type="nucleotide sequence ID" value="NC_002928.3"/>
</dbReference>
<dbReference type="SMR" id="Q7W2D2"/>
<dbReference type="GeneID" id="93206284"/>
<dbReference type="KEGG" id="bpa:BPP0054"/>
<dbReference type="HOGENOM" id="CLU_103849_1_2_4"/>
<dbReference type="Proteomes" id="UP000001421">
    <property type="component" value="Chromosome"/>
</dbReference>
<dbReference type="GO" id="GO:0005829">
    <property type="term" value="C:cytosol"/>
    <property type="evidence" value="ECO:0007669"/>
    <property type="project" value="TreeGrafter"/>
</dbReference>
<dbReference type="GO" id="GO:0015935">
    <property type="term" value="C:small ribosomal subunit"/>
    <property type="evidence" value="ECO:0007669"/>
    <property type="project" value="TreeGrafter"/>
</dbReference>
<dbReference type="GO" id="GO:0019843">
    <property type="term" value="F:rRNA binding"/>
    <property type="evidence" value="ECO:0007669"/>
    <property type="project" value="UniProtKB-UniRule"/>
</dbReference>
<dbReference type="GO" id="GO:0003735">
    <property type="term" value="F:structural constituent of ribosome"/>
    <property type="evidence" value="ECO:0007669"/>
    <property type="project" value="InterPro"/>
</dbReference>
<dbReference type="GO" id="GO:0000049">
    <property type="term" value="F:tRNA binding"/>
    <property type="evidence" value="ECO:0007669"/>
    <property type="project" value="UniProtKB-UniRule"/>
</dbReference>
<dbReference type="GO" id="GO:0006412">
    <property type="term" value="P:translation"/>
    <property type="evidence" value="ECO:0007669"/>
    <property type="project" value="UniProtKB-UniRule"/>
</dbReference>
<dbReference type="FunFam" id="1.10.8.50:FF:000001">
    <property type="entry name" value="30S ribosomal protein S13"/>
    <property type="match status" value="1"/>
</dbReference>
<dbReference type="FunFam" id="4.10.910.10:FF:000001">
    <property type="entry name" value="30S ribosomal protein S13"/>
    <property type="match status" value="1"/>
</dbReference>
<dbReference type="Gene3D" id="1.10.8.50">
    <property type="match status" value="1"/>
</dbReference>
<dbReference type="Gene3D" id="4.10.910.10">
    <property type="entry name" value="30s ribosomal protein s13, domain 2"/>
    <property type="match status" value="1"/>
</dbReference>
<dbReference type="HAMAP" id="MF_01315">
    <property type="entry name" value="Ribosomal_uS13"/>
    <property type="match status" value="1"/>
</dbReference>
<dbReference type="InterPro" id="IPR027437">
    <property type="entry name" value="Rbsml_uS13_C"/>
</dbReference>
<dbReference type="InterPro" id="IPR001892">
    <property type="entry name" value="Ribosomal_uS13"/>
</dbReference>
<dbReference type="InterPro" id="IPR010979">
    <property type="entry name" value="Ribosomal_uS13-like_H2TH"/>
</dbReference>
<dbReference type="InterPro" id="IPR019980">
    <property type="entry name" value="Ribosomal_uS13_bac-type"/>
</dbReference>
<dbReference type="InterPro" id="IPR018269">
    <property type="entry name" value="Ribosomal_uS13_CS"/>
</dbReference>
<dbReference type="NCBIfam" id="TIGR03631">
    <property type="entry name" value="uS13_bact"/>
    <property type="match status" value="1"/>
</dbReference>
<dbReference type="PANTHER" id="PTHR10871">
    <property type="entry name" value="30S RIBOSOMAL PROTEIN S13/40S RIBOSOMAL PROTEIN S18"/>
    <property type="match status" value="1"/>
</dbReference>
<dbReference type="PANTHER" id="PTHR10871:SF1">
    <property type="entry name" value="SMALL RIBOSOMAL SUBUNIT PROTEIN US13M"/>
    <property type="match status" value="1"/>
</dbReference>
<dbReference type="Pfam" id="PF00416">
    <property type="entry name" value="Ribosomal_S13"/>
    <property type="match status" value="2"/>
</dbReference>
<dbReference type="PIRSF" id="PIRSF002134">
    <property type="entry name" value="Ribosomal_S13"/>
    <property type="match status" value="1"/>
</dbReference>
<dbReference type="SUPFAM" id="SSF46946">
    <property type="entry name" value="S13-like H2TH domain"/>
    <property type="match status" value="1"/>
</dbReference>
<dbReference type="PROSITE" id="PS00646">
    <property type="entry name" value="RIBOSOMAL_S13_1"/>
    <property type="match status" value="1"/>
</dbReference>
<dbReference type="PROSITE" id="PS50159">
    <property type="entry name" value="RIBOSOMAL_S13_2"/>
    <property type="match status" value="1"/>
</dbReference>
<reference key="1">
    <citation type="journal article" date="2003" name="Nat. Genet.">
        <title>Comparative analysis of the genome sequences of Bordetella pertussis, Bordetella parapertussis and Bordetella bronchiseptica.</title>
        <authorList>
            <person name="Parkhill J."/>
            <person name="Sebaihia M."/>
            <person name="Preston A."/>
            <person name="Murphy L.D."/>
            <person name="Thomson N.R."/>
            <person name="Harris D.E."/>
            <person name="Holden M.T.G."/>
            <person name="Churcher C.M."/>
            <person name="Bentley S.D."/>
            <person name="Mungall K.L."/>
            <person name="Cerdeno-Tarraga A.-M."/>
            <person name="Temple L."/>
            <person name="James K.D."/>
            <person name="Harris B."/>
            <person name="Quail M.A."/>
            <person name="Achtman M."/>
            <person name="Atkin R."/>
            <person name="Baker S."/>
            <person name="Basham D."/>
            <person name="Bason N."/>
            <person name="Cherevach I."/>
            <person name="Chillingworth T."/>
            <person name="Collins M."/>
            <person name="Cronin A."/>
            <person name="Davis P."/>
            <person name="Doggett J."/>
            <person name="Feltwell T."/>
            <person name="Goble A."/>
            <person name="Hamlin N."/>
            <person name="Hauser H."/>
            <person name="Holroyd S."/>
            <person name="Jagels K."/>
            <person name="Leather S."/>
            <person name="Moule S."/>
            <person name="Norberczak H."/>
            <person name="O'Neil S."/>
            <person name="Ormond D."/>
            <person name="Price C."/>
            <person name="Rabbinowitsch E."/>
            <person name="Rutter S."/>
            <person name="Sanders M."/>
            <person name="Saunders D."/>
            <person name="Seeger K."/>
            <person name="Sharp S."/>
            <person name="Simmonds M."/>
            <person name="Skelton J."/>
            <person name="Squares R."/>
            <person name="Squares S."/>
            <person name="Stevens K."/>
            <person name="Unwin L."/>
            <person name="Whitehead S."/>
            <person name="Barrell B.G."/>
            <person name="Maskell D.J."/>
        </authorList>
    </citation>
    <scope>NUCLEOTIDE SEQUENCE [LARGE SCALE GENOMIC DNA]</scope>
    <source>
        <strain>12822 / ATCC BAA-587 / NCTC 13253</strain>
    </source>
</reference>
<accession>Q7W2D2</accession>
<comment type="function">
    <text evidence="1">Located at the top of the head of the 30S subunit, it contacts several helices of the 16S rRNA. In the 70S ribosome it contacts the 23S rRNA (bridge B1a) and protein L5 of the 50S subunit (bridge B1b), connecting the 2 subunits; these bridges are implicated in subunit movement. Contacts the tRNAs in the A and P-sites.</text>
</comment>
<comment type="subunit">
    <text evidence="1">Part of the 30S ribosomal subunit. Forms a loose heterodimer with protein S19. Forms two bridges to the 50S subunit in the 70S ribosome.</text>
</comment>
<comment type="similarity">
    <text evidence="1">Belongs to the universal ribosomal protein uS13 family.</text>
</comment>
<name>RS13_BORPA</name>
<proteinExistence type="inferred from homology"/>
<feature type="chain" id="PRO_0000230479" description="Small ribosomal subunit protein uS13">
    <location>
        <begin position="1"/>
        <end position="121"/>
    </location>
</feature>
<feature type="region of interest" description="Disordered" evidence="2">
    <location>
        <begin position="92"/>
        <end position="121"/>
    </location>
</feature>
<protein>
    <recommendedName>
        <fullName evidence="1">Small ribosomal subunit protein uS13</fullName>
    </recommendedName>
    <alternativeName>
        <fullName evidence="3">30S ribosomal protein S13</fullName>
    </alternativeName>
</protein>
<evidence type="ECO:0000255" key="1">
    <source>
        <dbReference type="HAMAP-Rule" id="MF_01315"/>
    </source>
</evidence>
<evidence type="ECO:0000256" key="2">
    <source>
        <dbReference type="SAM" id="MobiDB-lite"/>
    </source>
</evidence>
<evidence type="ECO:0000305" key="3"/>
<gene>
    <name evidence="1" type="primary">rpsM</name>
    <name type="ordered locus">BPP0054</name>
</gene>